<evidence type="ECO:0000255" key="1">
    <source>
        <dbReference type="HAMAP-Rule" id="MF_00033"/>
    </source>
</evidence>
<keyword id="KW-0131">Cell cycle</keyword>
<keyword id="KW-0132">Cell division</keyword>
<keyword id="KW-0997">Cell inner membrane</keyword>
<keyword id="KW-1003">Cell membrane</keyword>
<keyword id="KW-0133">Cell shape</keyword>
<keyword id="KW-0961">Cell wall biogenesis/degradation</keyword>
<keyword id="KW-0328">Glycosyltransferase</keyword>
<keyword id="KW-0472">Membrane</keyword>
<keyword id="KW-0573">Peptidoglycan synthesis</keyword>
<keyword id="KW-1185">Reference proteome</keyword>
<keyword id="KW-0808">Transferase</keyword>
<feature type="chain" id="PRO_1000192129" description="UDP-N-acetylglucosamine--N-acetylmuramyl-(pentapeptide) pyrophosphoryl-undecaprenol N-acetylglucosamine transferase">
    <location>
        <begin position="1"/>
        <end position="355"/>
    </location>
</feature>
<feature type="binding site" evidence="1">
    <location>
        <begin position="15"/>
        <end position="17"/>
    </location>
    <ligand>
        <name>UDP-N-acetyl-alpha-D-glucosamine</name>
        <dbReference type="ChEBI" id="CHEBI:57705"/>
    </ligand>
</feature>
<feature type="binding site" evidence="1">
    <location>
        <position position="127"/>
    </location>
    <ligand>
        <name>UDP-N-acetyl-alpha-D-glucosamine</name>
        <dbReference type="ChEBI" id="CHEBI:57705"/>
    </ligand>
</feature>
<feature type="binding site" evidence="1">
    <location>
        <position position="163"/>
    </location>
    <ligand>
        <name>UDP-N-acetyl-alpha-D-glucosamine</name>
        <dbReference type="ChEBI" id="CHEBI:57705"/>
    </ligand>
</feature>
<feature type="binding site" evidence="1">
    <location>
        <position position="191"/>
    </location>
    <ligand>
        <name>UDP-N-acetyl-alpha-D-glucosamine</name>
        <dbReference type="ChEBI" id="CHEBI:57705"/>
    </ligand>
</feature>
<feature type="binding site" evidence="1">
    <location>
        <position position="244"/>
    </location>
    <ligand>
        <name>UDP-N-acetyl-alpha-D-glucosamine</name>
        <dbReference type="ChEBI" id="CHEBI:57705"/>
    </ligand>
</feature>
<feature type="binding site" evidence="1">
    <location>
        <begin position="263"/>
        <end position="268"/>
    </location>
    <ligand>
        <name>UDP-N-acetyl-alpha-D-glucosamine</name>
        <dbReference type="ChEBI" id="CHEBI:57705"/>
    </ligand>
</feature>
<feature type="binding site" evidence="1">
    <location>
        <position position="288"/>
    </location>
    <ligand>
        <name>UDP-N-acetyl-alpha-D-glucosamine</name>
        <dbReference type="ChEBI" id="CHEBI:57705"/>
    </ligand>
</feature>
<dbReference type="EC" id="2.4.1.227" evidence="1"/>
<dbReference type="EMBL" id="FM180568">
    <property type="protein sequence ID" value="CAS07643.1"/>
    <property type="molecule type" value="Genomic_DNA"/>
</dbReference>
<dbReference type="RefSeq" id="WP_000016564.1">
    <property type="nucleotide sequence ID" value="NC_011601.1"/>
</dbReference>
<dbReference type="SMR" id="B7UIE0"/>
<dbReference type="CAZy" id="GT28">
    <property type="family name" value="Glycosyltransferase Family 28"/>
</dbReference>
<dbReference type="KEGG" id="ecg:E2348C_0095"/>
<dbReference type="HOGENOM" id="CLU_037404_2_0_6"/>
<dbReference type="UniPathway" id="UPA00219"/>
<dbReference type="Proteomes" id="UP000008205">
    <property type="component" value="Chromosome"/>
</dbReference>
<dbReference type="GO" id="GO:0005886">
    <property type="term" value="C:plasma membrane"/>
    <property type="evidence" value="ECO:0007669"/>
    <property type="project" value="UniProtKB-SubCell"/>
</dbReference>
<dbReference type="GO" id="GO:0051991">
    <property type="term" value="F:UDP-N-acetyl-D-glucosamine:N-acetylmuramoyl-L-alanyl-D-glutamyl-meso-2,6-diaminopimelyl-D-alanyl-D-alanine-diphosphoundecaprenol 4-beta-N-acetylglucosaminlytransferase activity"/>
    <property type="evidence" value="ECO:0007669"/>
    <property type="project" value="RHEA"/>
</dbReference>
<dbReference type="GO" id="GO:0050511">
    <property type="term" value="F:undecaprenyldiphospho-muramoylpentapeptide beta-N-acetylglucosaminyltransferase activity"/>
    <property type="evidence" value="ECO:0007669"/>
    <property type="project" value="UniProtKB-UniRule"/>
</dbReference>
<dbReference type="GO" id="GO:0005975">
    <property type="term" value="P:carbohydrate metabolic process"/>
    <property type="evidence" value="ECO:0007669"/>
    <property type="project" value="InterPro"/>
</dbReference>
<dbReference type="GO" id="GO:0051301">
    <property type="term" value="P:cell division"/>
    <property type="evidence" value="ECO:0007669"/>
    <property type="project" value="UniProtKB-KW"/>
</dbReference>
<dbReference type="GO" id="GO:0071555">
    <property type="term" value="P:cell wall organization"/>
    <property type="evidence" value="ECO:0007669"/>
    <property type="project" value="UniProtKB-KW"/>
</dbReference>
<dbReference type="GO" id="GO:0030259">
    <property type="term" value="P:lipid glycosylation"/>
    <property type="evidence" value="ECO:0007669"/>
    <property type="project" value="UniProtKB-UniRule"/>
</dbReference>
<dbReference type="GO" id="GO:0009252">
    <property type="term" value="P:peptidoglycan biosynthetic process"/>
    <property type="evidence" value="ECO:0007669"/>
    <property type="project" value="UniProtKB-UniRule"/>
</dbReference>
<dbReference type="GO" id="GO:0008360">
    <property type="term" value="P:regulation of cell shape"/>
    <property type="evidence" value="ECO:0007669"/>
    <property type="project" value="UniProtKB-KW"/>
</dbReference>
<dbReference type="CDD" id="cd03785">
    <property type="entry name" value="GT28_MurG"/>
    <property type="match status" value="1"/>
</dbReference>
<dbReference type="FunFam" id="3.40.50.2000:FF:000016">
    <property type="entry name" value="UDP-N-acetylglucosamine--N-acetylmuramyl-(pentapeptide) pyrophosphoryl-undecaprenol N-acetylglucosamine transferase"/>
    <property type="match status" value="1"/>
</dbReference>
<dbReference type="FunFam" id="3.40.50.2000:FF:000018">
    <property type="entry name" value="UDP-N-acetylglucosamine--N-acetylmuramyl-(pentapeptide) pyrophosphoryl-undecaprenol N-acetylglucosamine transferase"/>
    <property type="match status" value="1"/>
</dbReference>
<dbReference type="Gene3D" id="3.40.50.2000">
    <property type="entry name" value="Glycogen Phosphorylase B"/>
    <property type="match status" value="2"/>
</dbReference>
<dbReference type="HAMAP" id="MF_00033">
    <property type="entry name" value="MurG"/>
    <property type="match status" value="1"/>
</dbReference>
<dbReference type="InterPro" id="IPR006009">
    <property type="entry name" value="GlcNAc_MurG"/>
</dbReference>
<dbReference type="InterPro" id="IPR007235">
    <property type="entry name" value="Glyco_trans_28_C"/>
</dbReference>
<dbReference type="InterPro" id="IPR004276">
    <property type="entry name" value="GlycoTrans_28_N"/>
</dbReference>
<dbReference type="NCBIfam" id="TIGR01133">
    <property type="entry name" value="murG"/>
    <property type="match status" value="1"/>
</dbReference>
<dbReference type="PANTHER" id="PTHR21015:SF22">
    <property type="entry name" value="GLYCOSYLTRANSFERASE"/>
    <property type="match status" value="1"/>
</dbReference>
<dbReference type="PANTHER" id="PTHR21015">
    <property type="entry name" value="UDP-N-ACETYLGLUCOSAMINE--N-ACETYLMURAMYL-(PENTAPEPTIDE) PYROPHOSPHORYL-UNDECAPRENOL N-ACETYLGLUCOSAMINE TRANSFERASE 1"/>
    <property type="match status" value="1"/>
</dbReference>
<dbReference type="Pfam" id="PF04101">
    <property type="entry name" value="Glyco_tran_28_C"/>
    <property type="match status" value="1"/>
</dbReference>
<dbReference type="Pfam" id="PF03033">
    <property type="entry name" value="Glyco_transf_28"/>
    <property type="match status" value="1"/>
</dbReference>
<dbReference type="SUPFAM" id="SSF53756">
    <property type="entry name" value="UDP-Glycosyltransferase/glycogen phosphorylase"/>
    <property type="match status" value="1"/>
</dbReference>
<reference key="1">
    <citation type="journal article" date="2009" name="J. Bacteriol.">
        <title>Complete genome sequence and comparative genome analysis of enteropathogenic Escherichia coli O127:H6 strain E2348/69.</title>
        <authorList>
            <person name="Iguchi A."/>
            <person name="Thomson N.R."/>
            <person name="Ogura Y."/>
            <person name="Saunders D."/>
            <person name="Ooka T."/>
            <person name="Henderson I.R."/>
            <person name="Harris D."/>
            <person name="Asadulghani M."/>
            <person name="Kurokawa K."/>
            <person name="Dean P."/>
            <person name="Kenny B."/>
            <person name="Quail M.A."/>
            <person name="Thurston S."/>
            <person name="Dougan G."/>
            <person name="Hayashi T."/>
            <person name="Parkhill J."/>
            <person name="Frankel G."/>
        </authorList>
    </citation>
    <scope>NUCLEOTIDE SEQUENCE [LARGE SCALE GENOMIC DNA]</scope>
    <source>
        <strain>E2348/69 / EPEC</strain>
    </source>
</reference>
<comment type="function">
    <text evidence="1">Cell wall formation. Catalyzes the transfer of a GlcNAc subunit on undecaprenyl-pyrophosphoryl-MurNAc-pentapeptide (lipid intermediate I) to form undecaprenyl-pyrophosphoryl-MurNAc-(pentapeptide)GlcNAc (lipid intermediate II).</text>
</comment>
<comment type="catalytic activity">
    <reaction evidence="1">
        <text>di-trans,octa-cis-undecaprenyl diphospho-N-acetyl-alpha-D-muramoyl-L-alanyl-D-glutamyl-meso-2,6-diaminopimeloyl-D-alanyl-D-alanine + UDP-N-acetyl-alpha-D-glucosamine = di-trans,octa-cis-undecaprenyl diphospho-[N-acetyl-alpha-D-glucosaminyl-(1-&gt;4)]-N-acetyl-alpha-D-muramoyl-L-alanyl-D-glutamyl-meso-2,6-diaminopimeloyl-D-alanyl-D-alanine + UDP + H(+)</text>
        <dbReference type="Rhea" id="RHEA:31227"/>
        <dbReference type="ChEBI" id="CHEBI:15378"/>
        <dbReference type="ChEBI" id="CHEBI:57705"/>
        <dbReference type="ChEBI" id="CHEBI:58223"/>
        <dbReference type="ChEBI" id="CHEBI:61387"/>
        <dbReference type="ChEBI" id="CHEBI:61388"/>
        <dbReference type="EC" id="2.4.1.227"/>
    </reaction>
</comment>
<comment type="pathway">
    <text evidence="1">Cell wall biogenesis; peptidoglycan biosynthesis.</text>
</comment>
<comment type="subcellular location">
    <subcellularLocation>
        <location evidence="1">Cell inner membrane</location>
        <topology evidence="1">Peripheral membrane protein</topology>
        <orientation evidence="1">Cytoplasmic side</orientation>
    </subcellularLocation>
</comment>
<comment type="similarity">
    <text evidence="1">Belongs to the glycosyltransferase 28 family. MurG subfamily.</text>
</comment>
<protein>
    <recommendedName>
        <fullName evidence="1">UDP-N-acetylglucosamine--N-acetylmuramyl-(pentapeptide) pyrophosphoryl-undecaprenol N-acetylglucosamine transferase</fullName>
        <ecNumber evidence="1">2.4.1.227</ecNumber>
    </recommendedName>
    <alternativeName>
        <fullName evidence="1">Undecaprenyl-PP-MurNAc-pentapeptide-UDPGlcNAc GlcNAc transferase</fullName>
    </alternativeName>
</protein>
<sequence>MSGQGKRLMVMAGGTGGHVFPGLAVAHHLMAQGWQVRWLGTADRMEADLVPKHGIEIDFIRISGLRGKGIKALIAAPLRIFNAWRQARAIMKAYKPDVVLGMGGYVSGPGGLAAWSLGIPVVLHEQNGIAGLTNKWLAKIATKVMQAFPGAFPNAEVVGNPVRTDVLALPLPQQRLAGREGPVRVLVVGGSQGARILNQTMPQVAAKLGDSVTIWHQSGKGSQQSVEQAYAEAGQPQHKVTEFIDDMAAAYAWADVVVCRSGALTVSEIAAAGLPALFVPFQHKDRQQYWNALPLEKAGAAKIIEQSQLSVDAVANTLAGWSRETLLTMAERARAASIPDATERVANEVSRAARA</sequence>
<name>MURG_ECO27</name>
<organism>
    <name type="scientific">Escherichia coli O127:H6 (strain E2348/69 / EPEC)</name>
    <dbReference type="NCBI Taxonomy" id="574521"/>
    <lineage>
        <taxon>Bacteria</taxon>
        <taxon>Pseudomonadati</taxon>
        <taxon>Pseudomonadota</taxon>
        <taxon>Gammaproteobacteria</taxon>
        <taxon>Enterobacterales</taxon>
        <taxon>Enterobacteriaceae</taxon>
        <taxon>Escherichia</taxon>
    </lineage>
</organism>
<accession>B7UIE0</accession>
<gene>
    <name evidence="1" type="primary">murG</name>
    <name type="ordered locus">E2348C_0095</name>
</gene>
<proteinExistence type="inferred from homology"/>